<sequence length="130" mass="13599">MTTQSLETLVETLSNLTVLELAALKKLLEDKWDVTAAAPMMAVAAGAAVGGDAAPAESTEFAVILEDVPADKKIGVLKVVREVTGLALKEAKEMTEGLPKTVKEKTSKSDAEDTVKKLQDAGAKASFKGL</sequence>
<name>RL7_CHLCV</name>
<comment type="function">
    <text evidence="1">Forms part of the ribosomal stalk which helps the ribosome interact with GTP-bound translation factors. Is thus essential for accurate translation.</text>
</comment>
<comment type="subunit">
    <text evidence="1">Homodimer. Part of the ribosomal stalk of the 50S ribosomal subunit. Forms a multimeric L10(L12)X complex, where L10 forms an elongated spine to which 2 to 4 L12 dimers bind in a sequential fashion. Binds GTP-bound translation factors.</text>
</comment>
<comment type="similarity">
    <text evidence="1">Belongs to the bacterial ribosomal protein bL12 family.</text>
</comment>
<accession>Q822J0</accession>
<keyword id="KW-0687">Ribonucleoprotein</keyword>
<keyword id="KW-0689">Ribosomal protein</keyword>
<protein>
    <recommendedName>
        <fullName evidence="1">Large ribosomal subunit protein bL12</fullName>
    </recommendedName>
    <alternativeName>
        <fullName evidence="3">50S ribosomal protein L7/L12</fullName>
    </alternativeName>
</protein>
<gene>
    <name evidence="1" type="primary">rplL</name>
    <name type="ordered locus">CCA_00692</name>
</gene>
<evidence type="ECO:0000255" key="1">
    <source>
        <dbReference type="HAMAP-Rule" id="MF_00368"/>
    </source>
</evidence>
<evidence type="ECO:0000256" key="2">
    <source>
        <dbReference type="SAM" id="MobiDB-lite"/>
    </source>
</evidence>
<evidence type="ECO:0000305" key="3"/>
<feature type="chain" id="PRO_0000157516" description="Large ribosomal subunit protein bL12">
    <location>
        <begin position="1"/>
        <end position="130"/>
    </location>
</feature>
<feature type="region of interest" description="Disordered" evidence="2">
    <location>
        <begin position="94"/>
        <end position="114"/>
    </location>
</feature>
<proteinExistence type="inferred from homology"/>
<dbReference type="EMBL" id="AE015925">
    <property type="protein sequence ID" value="AAP05434.1"/>
    <property type="molecule type" value="Genomic_DNA"/>
</dbReference>
<dbReference type="RefSeq" id="WP_011006649.1">
    <property type="nucleotide sequence ID" value="NC_003361.3"/>
</dbReference>
<dbReference type="SMR" id="Q822J0"/>
<dbReference type="STRING" id="227941.CCA_00692"/>
<dbReference type="KEGG" id="cca:CCA_00692"/>
<dbReference type="eggNOG" id="COG0222">
    <property type="taxonomic scope" value="Bacteria"/>
</dbReference>
<dbReference type="HOGENOM" id="CLU_086499_3_0_0"/>
<dbReference type="OrthoDB" id="9811748at2"/>
<dbReference type="Proteomes" id="UP000002193">
    <property type="component" value="Chromosome"/>
</dbReference>
<dbReference type="GO" id="GO:0022625">
    <property type="term" value="C:cytosolic large ribosomal subunit"/>
    <property type="evidence" value="ECO:0007669"/>
    <property type="project" value="TreeGrafter"/>
</dbReference>
<dbReference type="GO" id="GO:0003729">
    <property type="term" value="F:mRNA binding"/>
    <property type="evidence" value="ECO:0007669"/>
    <property type="project" value="TreeGrafter"/>
</dbReference>
<dbReference type="GO" id="GO:0003735">
    <property type="term" value="F:structural constituent of ribosome"/>
    <property type="evidence" value="ECO:0007669"/>
    <property type="project" value="InterPro"/>
</dbReference>
<dbReference type="GO" id="GO:0006412">
    <property type="term" value="P:translation"/>
    <property type="evidence" value="ECO:0007669"/>
    <property type="project" value="UniProtKB-UniRule"/>
</dbReference>
<dbReference type="CDD" id="cd00387">
    <property type="entry name" value="Ribosomal_L7_L12"/>
    <property type="match status" value="1"/>
</dbReference>
<dbReference type="FunFam" id="3.30.1390.10:FF:000001">
    <property type="entry name" value="50S ribosomal protein L7/L12"/>
    <property type="match status" value="1"/>
</dbReference>
<dbReference type="Gene3D" id="3.30.1390.10">
    <property type="match status" value="1"/>
</dbReference>
<dbReference type="Gene3D" id="1.20.5.710">
    <property type="entry name" value="Single helix bin"/>
    <property type="match status" value="1"/>
</dbReference>
<dbReference type="HAMAP" id="MF_00368">
    <property type="entry name" value="Ribosomal_bL12"/>
    <property type="match status" value="1"/>
</dbReference>
<dbReference type="InterPro" id="IPR000206">
    <property type="entry name" value="Ribosomal_bL12"/>
</dbReference>
<dbReference type="InterPro" id="IPR013823">
    <property type="entry name" value="Ribosomal_bL12_C"/>
</dbReference>
<dbReference type="InterPro" id="IPR014719">
    <property type="entry name" value="Ribosomal_bL12_C/ClpS-like"/>
</dbReference>
<dbReference type="InterPro" id="IPR008932">
    <property type="entry name" value="Ribosomal_bL12_oligo"/>
</dbReference>
<dbReference type="InterPro" id="IPR036235">
    <property type="entry name" value="Ribosomal_bL12_oligo_N_sf"/>
</dbReference>
<dbReference type="NCBIfam" id="TIGR00855">
    <property type="entry name" value="L12"/>
    <property type="match status" value="1"/>
</dbReference>
<dbReference type="PANTHER" id="PTHR45987">
    <property type="entry name" value="39S RIBOSOMAL PROTEIN L12"/>
    <property type="match status" value="1"/>
</dbReference>
<dbReference type="PANTHER" id="PTHR45987:SF4">
    <property type="entry name" value="LARGE RIBOSOMAL SUBUNIT PROTEIN BL12M"/>
    <property type="match status" value="1"/>
</dbReference>
<dbReference type="Pfam" id="PF00542">
    <property type="entry name" value="Ribosomal_L12"/>
    <property type="match status" value="1"/>
</dbReference>
<dbReference type="Pfam" id="PF16320">
    <property type="entry name" value="Ribosomal_L12_N"/>
    <property type="match status" value="1"/>
</dbReference>
<dbReference type="SUPFAM" id="SSF54736">
    <property type="entry name" value="ClpS-like"/>
    <property type="match status" value="1"/>
</dbReference>
<dbReference type="SUPFAM" id="SSF48300">
    <property type="entry name" value="Ribosomal protein L7/12, oligomerisation (N-terminal) domain"/>
    <property type="match status" value="1"/>
</dbReference>
<reference key="1">
    <citation type="journal article" date="2003" name="Nucleic Acids Res.">
        <title>Genome sequence of Chlamydophila caviae (Chlamydia psittaci GPIC): examining the role of niche-specific genes in the evolution of the Chlamydiaceae.</title>
        <authorList>
            <person name="Read T.D."/>
            <person name="Myers G.S.A."/>
            <person name="Brunham R.C."/>
            <person name="Nelson W.C."/>
            <person name="Paulsen I.T."/>
            <person name="Heidelberg J.F."/>
            <person name="Holtzapple E.K."/>
            <person name="Khouri H.M."/>
            <person name="Federova N.B."/>
            <person name="Carty H.A."/>
            <person name="Umayam L.A."/>
            <person name="Haft D.H."/>
            <person name="Peterson J.D."/>
            <person name="Beanan M.J."/>
            <person name="White O."/>
            <person name="Salzberg S.L."/>
            <person name="Hsia R.-C."/>
            <person name="McClarty G."/>
            <person name="Rank R.G."/>
            <person name="Bavoil P.M."/>
            <person name="Fraser C.M."/>
        </authorList>
    </citation>
    <scope>NUCLEOTIDE SEQUENCE [LARGE SCALE GENOMIC DNA]</scope>
    <source>
        <strain>ATCC VR-813 / DSM 19441 / 03DC25 / GPIC</strain>
    </source>
</reference>
<organism>
    <name type="scientific">Chlamydia caviae (strain ATCC VR-813 / DSM 19441 / 03DC25 / GPIC)</name>
    <name type="common">Chlamydophila caviae</name>
    <dbReference type="NCBI Taxonomy" id="227941"/>
    <lineage>
        <taxon>Bacteria</taxon>
        <taxon>Pseudomonadati</taxon>
        <taxon>Chlamydiota</taxon>
        <taxon>Chlamydiia</taxon>
        <taxon>Chlamydiales</taxon>
        <taxon>Chlamydiaceae</taxon>
        <taxon>Chlamydia/Chlamydophila group</taxon>
        <taxon>Chlamydia</taxon>
    </lineage>
</organism>